<reference key="1">
    <citation type="submission" date="2006-11" db="EMBL/GenBank/DDBJ databases">
        <title>Annotation of Vibrio cholerae MZO-3.</title>
        <authorList>
            <person name="Heidelberg J."/>
            <person name="Sebastian Y."/>
        </authorList>
    </citation>
    <scope>NUCLEOTIDE SEQUENCE [GENOMIC DNA]</scope>
    <source>
        <strain>MZO-3</strain>
    </source>
</reference>
<reference key="2">
    <citation type="journal article" date="2010" name="PLoS Comput. Biol.">
        <title>Cholera- and anthrax-like toxins are among several new ADP-ribosyltransferases.</title>
        <authorList>
            <person name="Fieldhouse R.J."/>
            <person name="Turgeon Z."/>
            <person name="White D."/>
            <person name="Merrill A.R."/>
        </authorList>
    </citation>
    <scope>FUNCTION AS A TOXIN</scope>
    <scope>EXPRESSION IN YEAST</scope>
    <scope>SUBCELLULAR LOCATION</scope>
    <scope>MUTAGENESIS OF GLU-128 AND GLU-130</scope>
    <source>
        <strain>MZO-3</strain>
    </source>
</reference>
<organism>
    <name type="scientific">Vibrio cholerae</name>
    <dbReference type="NCBI Taxonomy" id="666"/>
    <lineage>
        <taxon>Bacteria</taxon>
        <taxon>Pseudomonadati</taxon>
        <taxon>Pseudomonadota</taxon>
        <taxon>Gammaproteobacteria</taxon>
        <taxon>Vibrionales</taxon>
        <taxon>Vibrionaceae</taxon>
        <taxon>Vibrio</taxon>
    </lineage>
</organism>
<comment type="function">
    <text evidence="3">A probable mono(ADP-ribosyl)transferase, it may ADP-ribosylate Arg in target protein(s). Upon expression in yeast cells causes cell death.</text>
</comment>
<comment type="catalytic activity">
    <reaction>
        <text>L-arginyl-[protein] + NAD(+) = N(omega)-(ADP-D-ribosyl)-L-arginyl-[protein] + nicotinamide + H(+)</text>
        <dbReference type="Rhea" id="RHEA:19149"/>
        <dbReference type="Rhea" id="RHEA-COMP:10532"/>
        <dbReference type="Rhea" id="RHEA-COMP:15087"/>
        <dbReference type="ChEBI" id="CHEBI:15378"/>
        <dbReference type="ChEBI" id="CHEBI:17154"/>
        <dbReference type="ChEBI" id="CHEBI:29965"/>
        <dbReference type="ChEBI" id="CHEBI:57540"/>
        <dbReference type="ChEBI" id="CHEBI:142554"/>
        <dbReference type="EC" id="2.4.2.31"/>
    </reaction>
</comment>
<comment type="subcellular location">
    <subcellularLocation>
        <location evidence="4">Secreted</location>
    </subcellularLocation>
</comment>
<comment type="miscellaneous">
    <text>Toxins are often highly strain specific; not encoded in strain ATCC 39315 / El Tor Inabe N16961.</text>
</comment>
<comment type="similarity">
    <text evidence="4">Belongs to the enterotoxin A family.</text>
</comment>
<keyword id="KW-1015">Disulfide bond</keyword>
<keyword id="KW-0260">Enterotoxin</keyword>
<keyword id="KW-0328">Glycosyltransferase</keyword>
<keyword id="KW-0520">NAD</keyword>
<keyword id="KW-0521">NADP</keyword>
<keyword id="KW-0547">Nucleotide-binding</keyword>
<keyword id="KW-0548">Nucleotidyltransferase</keyword>
<keyword id="KW-0964">Secreted</keyword>
<keyword id="KW-0732">Signal</keyword>
<keyword id="KW-0800">Toxin</keyword>
<keyword id="KW-0808">Transferase</keyword>
<keyword id="KW-0843">Virulence</keyword>
<name>CHELT_VIBCL</name>
<feature type="signal peptide" evidence="2">
    <location>
        <begin position="1"/>
        <end position="18"/>
    </location>
</feature>
<feature type="chain" id="PRO_0000410945" description="NAD(+)--arginine ADP-ribosyltransferase Chelt">
    <location>
        <begin position="19"/>
        <end position="601"/>
    </location>
</feature>
<feature type="active site" evidence="4">
    <location>
        <position position="130"/>
    </location>
</feature>
<feature type="binding site" evidence="2">
    <location>
        <begin position="26"/>
        <end position="43"/>
    </location>
    <ligand>
        <name>NAD(+)</name>
        <dbReference type="ChEBI" id="CHEBI:57540"/>
    </ligand>
</feature>
<feature type="binding site" evidence="2">
    <location>
        <position position="130"/>
    </location>
    <ligand>
        <name>NAD(+)</name>
        <dbReference type="ChEBI" id="CHEBI:57540"/>
    </ligand>
</feature>
<feature type="disulfide bond" evidence="1">
    <location>
        <begin position="205"/>
        <end position="220"/>
    </location>
</feature>
<feature type="mutagenesis site" description="Fully restores growth in yeast.">
    <original>ENE</original>
    <variation>ANA</variation>
    <location>
        <begin position="128"/>
        <end position="130"/>
    </location>
</feature>
<feature type="mutagenesis site" description="Restores 10% growth in yeast." evidence="3">
    <original>E</original>
    <variation>A</variation>
    <location>
        <position position="128"/>
    </location>
</feature>
<feature type="mutagenesis site" description="Restores 20% growth in yeast." evidence="3">
    <original>E</original>
    <variation>A</variation>
    <location>
        <position position="130"/>
    </location>
</feature>
<protein>
    <recommendedName>
        <fullName>NAD(+)--arginine ADP-ribosyltransferase Chelt</fullName>
        <ecNumber>2.4.2.31</ecNumber>
    </recommendedName>
    <alternativeName>
        <fullName>Putative mono(ADP-ribosyl)transferase</fullName>
        <shortName>mADPRT</shortName>
        <shortName>mART</shortName>
    </alternativeName>
    <alternativeName>
        <fullName>Toxin Chelt</fullName>
    </alternativeName>
</protein>
<sequence length="601" mass="68790">MKTIISLIFIMFPLFVSAHNGNFYRADSRSPNEIKDLGGLYPRGYYDFFERGTPMSISLYDHARGAPSGNTRYDDGFVSTTTDIDSAHEIGQNILSGYTEYYIYLIAPAPNLLDVNAVLGRYSPHPQENEYSALGGIPWTQVIGWYVVNNGVLDRNIHRNRQFRADLFNNLSPALPSESYQFAGFEPEHPAWRQEPWINFAPPGCGRNVRLTKHINQQDCSNSQEELVYKKLQDLRTQFKVDKKLKLVNKTSSNNIIFPNHDFIREWVDLDGNGDLSYCGFTVDSDGSRKRIVCAHNNGNFTYSSINISLSDYGWPKGQRFIDANGDGLVDYCRVQYVWTHLYCSLSLPGQYFSLDKDAGYLDAGYNNSRAWAKVIGTNKYSFCRLTSNGYICTDIDSYSTAFKDDDQGWADSRYWMDIDGNGGDDYCRLVYNWTHLRCNLQGKDGLWKRVESKYLDGGYPSLRFKIKMTSNKDNYCRIVRNHRVMECAYVSDNGEFHNYSLNMPFSLYNKNDIQFIDIDGDNRDDICRYNSAPNTMECYLNQDKSFSQNKLVLYLSAKPISSLGSGSSKIIRTFNSEKNSSAYCYNAGYGTLRCDEFVIY</sequence>
<gene>
    <name type="ORF">A51_B1772</name>
</gene>
<proteinExistence type="evidence at protein level"/>
<accession>A2PU44</accession>
<dbReference type="EC" id="2.4.2.31"/>
<dbReference type="EMBL" id="AAUU01000054">
    <property type="protein sequence ID" value="EAY40854.1"/>
    <property type="molecule type" value="Genomic_DNA"/>
</dbReference>
<dbReference type="RefSeq" id="WP_001897790.1">
    <property type="nucleotide sequence ID" value="NZ_VTWR01000001.1"/>
</dbReference>
<dbReference type="SMR" id="A2PU44"/>
<dbReference type="PATRIC" id="fig|666.2183.peg.780"/>
<dbReference type="GO" id="GO:0005615">
    <property type="term" value="C:extracellular space"/>
    <property type="evidence" value="ECO:0007669"/>
    <property type="project" value="InterPro"/>
</dbReference>
<dbReference type="GO" id="GO:0106274">
    <property type="term" value="F:NAD+-protein-arginine ADP-ribosyltransferase activity"/>
    <property type="evidence" value="ECO:0007669"/>
    <property type="project" value="UniProtKB-EC"/>
</dbReference>
<dbReference type="GO" id="GO:0000166">
    <property type="term" value="F:nucleotide binding"/>
    <property type="evidence" value="ECO:0007669"/>
    <property type="project" value="UniProtKB-KW"/>
</dbReference>
<dbReference type="GO" id="GO:0016779">
    <property type="term" value="F:nucleotidyltransferase activity"/>
    <property type="evidence" value="ECO:0007669"/>
    <property type="project" value="UniProtKB-KW"/>
</dbReference>
<dbReference type="GO" id="GO:0090729">
    <property type="term" value="F:toxin activity"/>
    <property type="evidence" value="ECO:0007669"/>
    <property type="project" value="UniProtKB-KW"/>
</dbReference>
<dbReference type="Gene3D" id="3.90.210.10">
    <property type="entry name" value="Heat-Labile Enterotoxin, subunit A"/>
    <property type="match status" value="1"/>
</dbReference>
<dbReference type="InterPro" id="IPR001144">
    <property type="entry name" value="Enterotoxin_A"/>
</dbReference>
<dbReference type="InterPro" id="IPR028994">
    <property type="entry name" value="Integrin_alpha_N"/>
</dbReference>
<dbReference type="Pfam" id="PF01375">
    <property type="entry name" value="Enterotoxin_a"/>
    <property type="match status" value="1"/>
</dbReference>
<dbReference type="PRINTS" id="PR00771">
    <property type="entry name" value="ENTEROTOXINA"/>
</dbReference>
<dbReference type="SUPFAM" id="SSF56399">
    <property type="entry name" value="ADP-ribosylation"/>
    <property type="match status" value="1"/>
</dbReference>
<dbReference type="SUPFAM" id="SSF69318">
    <property type="entry name" value="Integrin alpha N-terminal domain"/>
    <property type="match status" value="1"/>
</dbReference>
<evidence type="ECO:0000250" key="1"/>
<evidence type="ECO:0000255" key="2"/>
<evidence type="ECO:0000269" key="3">
    <source>
    </source>
</evidence>
<evidence type="ECO:0000305" key="4"/>